<gene>
    <name evidence="1" type="primary">ffh</name>
    <name type="ordered locus">RT0164</name>
</gene>
<sequence length="449" mass="49352">MFKTLTQNLTKIFDRLVNSGILTENQIDTAMRDVRVALLESDVALPVIKGFIAEVKQKALGQEVIKSVSPGQMIIKIIHEEMINLLASSESTTKLNLNSKPPVNLLMVGLQGGGKTTASGKLALLLKNQNKKVLLVSLDTYRPAAQEQLAIIANSVNIDSLPIVQGEQPLDIVKRAISEAKIFAYDVVIYDTAGRIQIDNVMMEEALAIKKILNPTETLLVIDSMTGQDAVVTARSFSDKLEISGLILSRIDGDTKGGAALSVKYLTQKPIKFLSCGEKLTDLEEFDAERLASRILDMGDIISFVKKAASIVDREEAERTAIKLKSGKFDLNDYLKHMRSIKKMGGFGSILSMLPGSGKIIDQIDQSKLDSRIIEHQEAIILSMTLKERKNPDIINASRRKRIAAGAGMTVQKVNILLKQYKQISAVMKKASKMNPQNLFRSGISKLFS</sequence>
<dbReference type="EC" id="3.6.5.4" evidence="1"/>
<dbReference type="EMBL" id="AE017197">
    <property type="protein sequence ID" value="AAU03648.1"/>
    <property type="molecule type" value="Genomic_DNA"/>
</dbReference>
<dbReference type="RefSeq" id="WP_011190635.1">
    <property type="nucleotide sequence ID" value="NC_006142.1"/>
</dbReference>
<dbReference type="SMR" id="Q68XJ4"/>
<dbReference type="KEGG" id="rty:RT0164"/>
<dbReference type="eggNOG" id="COG0541">
    <property type="taxonomic scope" value="Bacteria"/>
</dbReference>
<dbReference type="HOGENOM" id="CLU_009301_6_0_5"/>
<dbReference type="OrthoDB" id="9804720at2"/>
<dbReference type="Proteomes" id="UP000000604">
    <property type="component" value="Chromosome"/>
</dbReference>
<dbReference type="GO" id="GO:0048500">
    <property type="term" value="C:signal recognition particle"/>
    <property type="evidence" value="ECO:0007669"/>
    <property type="project" value="UniProtKB-UniRule"/>
</dbReference>
<dbReference type="GO" id="GO:0008312">
    <property type="term" value="F:7S RNA binding"/>
    <property type="evidence" value="ECO:0007669"/>
    <property type="project" value="InterPro"/>
</dbReference>
<dbReference type="GO" id="GO:0016887">
    <property type="term" value="F:ATP hydrolysis activity"/>
    <property type="evidence" value="ECO:0007669"/>
    <property type="project" value="InterPro"/>
</dbReference>
<dbReference type="GO" id="GO:0005525">
    <property type="term" value="F:GTP binding"/>
    <property type="evidence" value="ECO:0007669"/>
    <property type="project" value="UniProtKB-UniRule"/>
</dbReference>
<dbReference type="GO" id="GO:0003924">
    <property type="term" value="F:GTPase activity"/>
    <property type="evidence" value="ECO:0007669"/>
    <property type="project" value="UniProtKB-UniRule"/>
</dbReference>
<dbReference type="GO" id="GO:0006614">
    <property type="term" value="P:SRP-dependent cotranslational protein targeting to membrane"/>
    <property type="evidence" value="ECO:0007669"/>
    <property type="project" value="InterPro"/>
</dbReference>
<dbReference type="CDD" id="cd18539">
    <property type="entry name" value="SRP_G"/>
    <property type="match status" value="1"/>
</dbReference>
<dbReference type="Gene3D" id="3.40.50.300">
    <property type="entry name" value="P-loop containing nucleotide triphosphate hydrolases"/>
    <property type="match status" value="1"/>
</dbReference>
<dbReference type="Gene3D" id="1.20.120.140">
    <property type="entry name" value="Signal recognition particle SRP54, nucleotide-binding domain"/>
    <property type="match status" value="1"/>
</dbReference>
<dbReference type="Gene3D" id="1.10.260.30">
    <property type="entry name" value="Signal recognition particle, SRP54 subunit, M-domain"/>
    <property type="match status" value="1"/>
</dbReference>
<dbReference type="HAMAP" id="MF_00306">
    <property type="entry name" value="SRP54"/>
    <property type="match status" value="1"/>
</dbReference>
<dbReference type="InterPro" id="IPR003593">
    <property type="entry name" value="AAA+_ATPase"/>
</dbReference>
<dbReference type="InterPro" id="IPR027417">
    <property type="entry name" value="P-loop_NTPase"/>
</dbReference>
<dbReference type="InterPro" id="IPR036891">
    <property type="entry name" value="Signal_recog_part_SRP54_M_sf"/>
</dbReference>
<dbReference type="InterPro" id="IPR013822">
    <property type="entry name" value="Signal_recog_particl_SRP54_hlx"/>
</dbReference>
<dbReference type="InterPro" id="IPR004125">
    <property type="entry name" value="Signal_recog_particle_SRP54_M"/>
</dbReference>
<dbReference type="InterPro" id="IPR004780">
    <property type="entry name" value="SRP"/>
</dbReference>
<dbReference type="InterPro" id="IPR022941">
    <property type="entry name" value="SRP54"/>
</dbReference>
<dbReference type="InterPro" id="IPR000897">
    <property type="entry name" value="SRP54_GTPase_dom"/>
</dbReference>
<dbReference type="InterPro" id="IPR042101">
    <property type="entry name" value="SRP54_N_sf"/>
</dbReference>
<dbReference type="NCBIfam" id="TIGR00959">
    <property type="entry name" value="ffh"/>
    <property type="match status" value="1"/>
</dbReference>
<dbReference type="PANTHER" id="PTHR11564">
    <property type="entry name" value="SIGNAL RECOGNITION PARTICLE 54K PROTEIN SRP54"/>
    <property type="match status" value="1"/>
</dbReference>
<dbReference type="PANTHER" id="PTHR11564:SF5">
    <property type="entry name" value="SIGNAL RECOGNITION PARTICLE SUBUNIT SRP54"/>
    <property type="match status" value="1"/>
</dbReference>
<dbReference type="Pfam" id="PF00448">
    <property type="entry name" value="SRP54"/>
    <property type="match status" value="1"/>
</dbReference>
<dbReference type="Pfam" id="PF02881">
    <property type="entry name" value="SRP54_N"/>
    <property type="match status" value="1"/>
</dbReference>
<dbReference type="Pfam" id="PF02978">
    <property type="entry name" value="SRP_SPB"/>
    <property type="match status" value="1"/>
</dbReference>
<dbReference type="SMART" id="SM00382">
    <property type="entry name" value="AAA"/>
    <property type="match status" value="1"/>
</dbReference>
<dbReference type="SMART" id="SM00962">
    <property type="entry name" value="SRP54"/>
    <property type="match status" value="1"/>
</dbReference>
<dbReference type="SMART" id="SM00963">
    <property type="entry name" value="SRP54_N"/>
    <property type="match status" value="1"/>
</dbReference>
<dbReference type="SUPFAM" id="SSF52540">
    <property type="entry name" value="P-loop containing nucleoside triphosphate hydrolases"/>
    <property type="match status" value="1"/>
</dbReference>
<dbReference type="SUPFAM" id="SSF47446">
    <property type="entry name" value="Signal peptide-binding domain"/>
    <property type="match status" value="1"/>
</dbReference>
<dbReference type="PROSITE" id="PS00300">
    <property type="entry name" value="SRP54"/>
    <property type="match status" value="1"/>
</dbReference>
<evidence type="ECO:0000255" key="1">
    <source>
        <dbReference type="HAMAP-Rule" id="MF_00306"/>
    </source>
</evidence>
<comment type="function">
    <text evidence="1">Involved in targeting and insertion of nascent membrane proteins into the cytoplasmic membrane. Binds to the hydrophobic signal sequence of the ribosome-nascent chain (RNC) as it emerges from the ribosomes. The SRP-RNC complex is then targeted to the cytoplasmic membrane where it interacts with the SRP receptor FtsY. Interaction with FtsY leads to the transfer of the RNC complex to the Sec translocase for insertion into the membrane, the hydrolysis of GTP by both Ffh and FtsY, and the dissociation of the SRP-FtsY complex into the individual components.</text>
</comment>
<comment type="catalytic activity">
    <reaction evidence="1">
        <text>GTP + H2O = GDP + phosphate + H(+)</text>
        <dbReference type="Rhea" id="RHEA:19669"/>
        <dbReference type="ChEBI" id="CHEBI:15377"/>
        <dbReference type="ChEBI" id="CHEBI:15378"/>
        <dbReference type="ChEBI" id="CHEBI:37565"/>
        <dbReference type="ChEBI" id="CHEBI:43474"/>
        <dbReference type="ChEBI" id="CHEBI:58189"/>
        <dbReference type="EC" id="3.6.5.4"/>
    </reaction>
</comment>
<comment type="subunit">
    <text evidence="1">Part of the signal recognition particle protein translocation system, which is composed of SRP and FtsY. SRP is a ribonucleoprotein composed of Ffh and a 4.5S RNA molecule.</text>
</comment>
<comment type="subcellular location">
    <subcellularLocation>
        <location evidence="1">Cytoplasm</location>
    </subcellularLocation>
    <text evidence="1">The SRP-RNC complex is targeted to the cytoplasmic membrane.</text>
</comment>
<comment type="domain">
    <text evidence="1">Composed of three domains: the N-terminal N domain, which is responsible for interactions with the ribosome, the central G domain, which binds GTP, and the C-terminal M domain, which binds the RNA and the signal sequence of the RNC.</text>
</comment>
<comment type="similarity">
    <text evidence="1">Belongs to the GTP-binding SRP family. SRP54 subfamily.</text>
</comment>
<name>SRP54_RICTY</name>
<proteinExistence type="inferred from homology"/>
<reference key="1">
    <citation type="journal article" date="2004" name="J. Bacteriol.">
        <title>Complete genome sequence of Rickettsia typhi and comparison with sequences of other Rickettsiae.</title>
        <authorList>
            <person name="McLeod M.P."/>
            <person name="Qin X."/>
            <person name="Karpathy S.E."/>
            <person name="Gioia J."/>
            <person name="Highlander S.K."/>
            <person name="Fox G.E."/>
            <person name="McNeill T.Z."/>
            <person name="Jiang H."/>
            <person name="Muzny D."/>
            <person name="Jacob L.S."/>
            <person name="Hawes A.C."/>
            <person name="Sodergren E."/>
            <person name="Gill R."/>
            <person name="Hume J."/>
            <person name="Morgan M."/>
            <person name="Fan G."/>
            <person name="Amin A.G."/>
            <person name="Gibbs R.A."/>
            <person name="Hong C."/>
            <person name="Yu X.-J."/>
            <person name="Walker D.H."/>
            <person name="Weinstock G.M."/>
        </authorList>
    </citation>
    <scope>NUCLEOTIDE SEQUENCE [LARGE SCALE GENOMIC DNA]</scope>
    <source>
        <strain>ATCC VR-144 / Wilmington</strain>
    </source>
</reference>
<protein>
    <recommendedName>
        <fullName evidence="1">Signal recognition particle protein</fullName>
        <ecNumber evidence="1">3.6.5.4</ecNumber>
    </recommendedName>
    <alternativeName>
        <fullName evidence="1">Fifty-four homolog</fullName>
    </alternativeName>
</protein>
<organism>
    <name type="scientific">Rickettsia typhi (strain ATCC VR-144 / Wilmington)</name>
    <dbReference type="NCBI Taxonomy" id="257363"/>
    <lineage>
        <taxon>Bacteria</taxon>
        <taxon>Pseudomonadati</taxon>
        <taxon>Pseudomonadota</taxon>
        <taxon>Alphaproteobacteria</taxon>
        <taxon>Rickettsiales</taxon>
        <taxon>Rickettsiaceae</taxon>
        <taxon>Rickettsieae</taxon>
        <taxon>Rickettsia</taxon>
        <taxon>typhus group</taxon>
    </lineage>
</organism>
<feature type="chain" id="PRO_0000286500" description="Signal recognition particle protein">
    <location>
        <begin position="1"/>
        <end position="449"/>
    </location>
</feature>
<feature type="binding site" evidence="1">
    <location>
        <begin position="109"/>
        <end position="116"/>
    </location>
    <ligand>
        <name>GTP</name>
        <dbReference type="ChEBI" id="CHEBI:37565"/>
    </ligand>
</feature>
<feature type="binding site" evidence="1">
    <location>
        <begin position="191"/>
        <end position="195"/>
    </location>
    <ligand>
        <name>GTP</name>
        <dbReference type="ChEBI" id="CHEBI:37565"/>
    </ligand>
</feature>
<feature type="binding site" evidence="1">
    <location>
        <begin position="249"/>
        <end position="252"/>
    </location>
    <ligand>
        <name>GTP</name>
        <dbReference type="ChEBI" id="CHEBI:37565"/>
    </ligand>
</feature>
<accession>Q68XJ4</accession>
<keyword id="KW-0963">Cytoplasm</keyword>
<keyword id="KW-0342">GTP-binding</keyword>
<keyword id="KW-0378">Hydrolase</keyword>
<keyword id="KW-0547">Nucleotide-binding</keyword>
<keyword id="KW-0687">Ribonucleoprotein</keyword>
<keyword id="KW-0694">RNA-binding</keyword>
<keyword id="KW-0733">Signal recognition particle</keyword>